<sequence length="166" mass="18376">MRMSTTTEIIAHHWAFAVFLIGAVGLCGLMLLGAYFLGGRAQARAKNVPYESGIDSVGSARMRLSAKFYLVAMFFVIFDVEALYLYAWSISIRESGWIGFIEAAIFILVLLAGLFYLVRIGALDWTPTRSNRRVSKPSTVRYASSHPQDISQELSVAGSQQANESR</sequence>
<gene>
    <name evidence="1" type="primary">nuoA</name>
    <name type="ordered locus">YpAngola_A1816</name>
</gene>
<feature type="chain" id="PRO_0000362799" description="NADH-quinone oxidoreductase subunit A">
    <location>
        <begin position="1"/>
        <end position="166"/>
    </location>
</feature>
<feature type="transmembrane region" description="Helical" evidence="1">
    <location>
        <begin position="16"/>
        <end position="36"/>
    </location>
</feature>
<feature type="transmembrane region" description="Helical" evidence="1">
    <location>
        <begin position="68"/>
        <end position="88"/>
    </location>
</feature>
<feature type="transmembrane region" description="Helical" evidence="1">
    <location>
        <begin position="98"/>
        <end position="118"/>
    </location>
</feature>
<feature type="region of interest" description="Disordered" evidence="2">
    <location>
        <begin position="141"/>
        <end position="166"/>
    </location>
</feature>
<comment type="function">
    <text evidence="1">NDH-1 shuttles electrons from NADH, via FMN and iron-sulfur (Fe-S) centers, to quinones in the respiratory chain. The immediate electron acceptor for the enzyme in this species is believed to be ubiquinone. Couples the redox reaction to proton translocation (for every two electrons transferred, four hydrogen ions are translocated across the cytoplasmic membrane), and thus conserves the redox energy in a proton gradient.</text>
</comment>
<comment type="catalytic activity">
    <reaction evidence="1">
        <text>a quinone + NADH + 5 H(+)(in) = a quinol + NAD(+) + 4 H(+)(out)</text>
        <dbReference type="Rhea" id="RHEA:57888"/>
        <dbReference type="ChEBI" id="CHEBI:15378"/>
        <dbReference type="ChEBI" id="CHEBI:24646"/>
        <dbReference type="ChEBI" id="CHEBI:57540"/>
        <dbReference type="ChEBI" id="CHEBI:57945"/>
        <dbReference type="ChEBI" id="CHEBI:132124"/>
    </reaction>
</comment>
<comment type="subunit">
    <text evidence="1">NDH-1 is composed of 13 different subunits. Subunits NuoA, H, J, K, L, M, N constitute the membrane sector of the complex.</text>
</comment>
<comment type="subcellular location">
    <subcellularLocation>
        <location evidence="1">Cell inner membrane</location>
        <topology evidence="1">Multi-pass membrane protein</topology>
    </subcellularLocation>
</comment>
<comment type="similarity">
    <text evidence="1">Belongs to the complex I subunit 3 family.</text>
</comment>
<organism>
    <name type="scientific">Yersinia pestis bv. Antiqua (strain Angola)</name>
    <dbReference type="NCBI Taxonomy" id="349746"/>
    <lineage>
        <taxon>Bacteria</taxon>
        <taxon>Pseudomonadati</taxon>
        <taxon>Pseudomonadota</taxon>
        <taxon>Gammaproteobacteria</taxon>
        <taxon>Enterobacterales</taxon>
        <taxon>Yersiniaceae</taxon>
        <taxon>Yersinia</taxon>
    </lineage>
</organism>
<dbReference type="EC" id="7.1.1.-" evidence="1"/>
<dbReference type="EMBL" id="CP000901">
    <property type="protein sequence ID" value="ABX86805.1"/>
    <property type="molecule type" value="Genomic_DNA"/>
</dbReference>
<dbReference type="RefSeq" id="WP_002210279.1">
    <property type="nucleotide sequence ID" value="NZ_CP009935.1"/>
</dbReference>
<dbReference type="SMR" id="A9R6M0"/>
<dbReference type="KEGG" id="ypg:YpAngola_A1816"/>
<dbReference type="GO" id="GO:0030964">
    <property type="term" value="C:NADH dehydrogenase complex"/>
    <property type="evidence" value="ECO:0007669"/>
    <property type="project" value="TreeGrafter"/>
</dbReference>
<dbReference type="GO" id="GO:0005886">
    <property type="term" value="C:plasma membrane"/>
    <property type="evidence" value="ECO:0007669"/>
    <property type="project" value="UniProtKB-SubCell"/>
</dbReference>
<dbReference type="GO" id="GO:0008137">
    <property type="term" value="F:NADH dehydrogenase (ubiquinone) activity"/>
    <property type="evidence" value="ECO:0007669"/>
    <property type="project" value="InterPro"/>
</dbReference>
<dbReference type="GO" id="GO:0050136">
    <property type="term" value="F:NADH:ubiquinone reductase (non-electrogenic) activity"/>
    <property type="evidence" value="ECO:0007669"/>
    <property type="project" value="UniProtKB-UniRule"/>
</dbReference>
<dbReference type="GO" id="GO:0048038">
    <property type="term" value="F:quinone binding"/>
    <property type="evidence" value="ECO:0007669"/>
    <property type="project" value="UniProtKB-KW"/>
</dbReference>
<dbReference type="FunFam" id="1.20.58.1610:FF:000003">
    <property type="entry name" value="NADH-quinone oxidoreductase subunit A"/>
    <property type="match status" value="1"/>
</dbReference>
<dbReference type="Gene3D" id="1.20.58.1610">
    <property type="entry name" value="NADH:ubiquinone/plastoquinone oxidoreductase, chain 3"/>
    <property type="match status" value="1"/>
</dbReference>
<dbReference type="HAMAP" id="MF_01394">
    <property type="entry name" value="NDH1_NuoA"/>
    <property type="match status" value="1"/>
</dbReference>
<dbReference type="InterPro" id="IPR023043">
    <property type="entry name" value="NAD(P)H_OxRDtase_bac/plastid"/>
</dbReference>
<dbReference type="InterPro" id="IPR000440">
    <property type="entry name" value="NADH_UbQ/plastoQ_OxRdtase_su3"/>
</dbReference>
<dbReference type="InterPro" id="IPR038430">
    <property type="entry name" value="NDAH_ubi_oxred_su3_sf"/>
</dbReference>
<dbReference type="PANTHER" id="PTHR11058:SF21">
    <property type="entry name" value="NADH-QUINONE OXIDOREDUCTASE SUBUNIT A"/>
    <property type="match status" value="1"/>
</dbReference>
<dbReference type="PANTHER" id="PTHR11058">
    <property type="entry name" value="NADH-UBIQUINONE OXIDOREDUCTASE CHAIN 3"/>
    <property type="match status" value="1"/>
</dbReference>
<dbReference type="Pfam" id="PF00507">
    <property type="entry name" value="Oxidored_q4"/>
    <property type="match status" value="1"/>
</dbReference>
<reference key="1">
    <citation type="journal article" date="2010" name="J. Bacteriol.">
        <title>Genome sequence of the deep-rooted Yersinia pestis strain Angola reveals new insights into the evolution and pangenome of the plague bacterium.</title>
        <authorList>
            <person name="Eppinger M."/>
            <person name="Worsham P.L."/>
            <person name="Nikolich M.P."/>
            <person name="Riley D.R."/>
            <person name="Sebastian Y."/>
            <person name="Mou S."/>
            <person name="Achtman M."/>
            <person name="Lindler L.E."/>
            <person name="Ravel J."/>
        </authorList>
    </citation>
    <scope>NUCLEOTIDE SEQUENCE [LARGE SCALE GENOMIC DNA]</scope>
    <source>
        <strain>Angola</strain>
    </source>
</reference>
<name>NUOA_YERPG</name>
<evidence type="ECO:0000255" key="1">
    <source>
        <dbReference type="HAMAP-Rule" id="MF_01394"/>
    </source>
</evidence>
<evidence type="ECO:0000256" key="2">
    <source>
        <dbReference type="SAM" id="MobiDB-lite"/>
    </source>
</evidence>
<keyword id="KW-0997">Cell inner membrane</keyword>
<keyword id="KW-1003">Cell membrane</keyword>
<keyword id="KW-0472">Membrane</keyword>
<keyword id="KW-0520">NAD</keyword>
<keyword id="KW-0874">Quinone</keyword>
<keyword id="KW-1278">Translocase</keyword>
<keyword id="KW-0812">Transmembrane</keyword>
<keyword id="KW-1133">Transmembrane helix</keyword>
<keyword id="KW-0813">Transport</keyword>
<keyword id="KW-0830">Ubiquinone</keyword>
<proteinExistence type="inferred from homology"/>
<accession>A9R6M0</accession>
<protein>
    <recommendedName>
        <fullName evidence="1">NADH-quinone oxidoreductase subunit A</fullName>
        <ecNumber evidence="1">7.1.1.-</ecNumber>
    </recommendedName>
    <alternativeName>
        <fullName evidence="1">NADH dehydrogenase I subunit A</fullName>
    </alternativeName>
    <alternativeName>
        <fullName evidence="1">NDH-1 subunit A</fullName>
    </alternativeName>
    <alternativeName>
        <fullName evidence="1">NUO1</fullName>
    </alternativeName>
</protein>